<proteinExistence type="inferred from homology"/>
<sequence>MMSARYPRTAAEWTTRIQGVSSERCDLEMLLKDEWRNRIAVRDDDPGVRATRQRDIVVDGREYTALKDALRAADGVSAGALALASLHSVMRAYGHGEQTVAAFVDATATAELKTAAVLPVIVDHIEHTRLTCAEAIRELDETLRRKDSYTRADEVLQRGLFDALLVLAEREVALSELPSAPLVMVVRDDAARGRLCWTMAYAGELFEDTTVAGVLEVVREVLGQYAGRPGDRVAEIELASREQRERLQRWNATDGDFPADQRLNDLVEAAVRRSPDREAVVFGTQRLTYREVDARANRFAHWLLGPGLGVRSQQLVGIFLDKSDLGVVATLGIWKAGAAYVPIDPAYPAERVRFAVGDTGLRGIVTNRHHAGRLREILGAEHADVTVVEIESVLDEQAAADTDGLLSVKPELALGVRDLAYLTYTSGTTGVPKGVPKYHDSVVNSITDLSERYDMRRPGTERVALFASYVFEPHLRQTLIALINGQTLVVVPEEVRLDPDRFPAYIEEHGVTYLNATGSVLQHFDLRRRTSLKRLLLVGEELTAAGLRQLRERFSGRIVNEYAFTEAAFVTAVKKFAPGVTERADRSIGRPVRNVKWYVLSQDLKRLPVGAIGELYIGGCGVAPGYLNRDDLTAERFLTNPYASEQDRARGTNARIYRTGDLARMLPSGEVEFMGRSDFQLKLNGVRVEPGEIEAQATEYAGVRKCVVIAREGAGGGSDRHLVGYYLTEPGAGVTEAELLSFLERRLIRIMVPARMVRLESIPVNVNGKVDWRALPEVDLARPDTGGGAVGSTTTGGVRGELREI</sequence>
<dbReference type="EC" id="6.3.2.26"/>
<dbReference type="EMBL" id="U12015">
    <property type="protein sequence ID" value="AAB39900.1"/>
    <property type="molecule type" value="Genomic_DNA"/>
</dbReference>
<dbReference type="EMBL" id="M64834">
    <property type="protein sequence ID" value="AAA26778.1"/>
    <property type="molecule type" value="Genomic_DNA"/>
</dbReference>
<dbReference type="PIR" id="B38169">
    <property type="entry name" value="B38169"/>
</dbReference>
<dbReference type="SMR" id="Q01757"/>
<dbReference type="STRING" id="1901.BB341_07790"/>
<dbReference type="UniPathway" id="UPA00149">
    <property type="reaction ID" value="UER00239"/>
</dbReference>
<dbReference type="GO" id="GO:0005737">
    <property type="term" value="C:cytoplasm"/>
    <property type="evidence" value="ECO:0007669"/>
    <property type="project" value="TreeGrafter"/>
</dbReference>
<dbReference type="GO" id="GO:0005524">
    <property type="term" value="F:ATP binding"/>
    <property type="evidence" value="ECO:0007669"/>
    <property type="project" value="UniProtKB-KW"/>
</dbReference>
<dbReference type="GO" id="GO:0050564">
    <property type="term" value="F:N-(5-amino-5-carboxypentanoyl)-L-cysteinyl-D-valine synthase activity"/>
    <property type="evidence" value="ECO:0007669"/>
    <property type="project" value="UniProtKB-EC"/>
</dbReference>
<dbReference type="GO" id="GO:0031177">
    <property type="term" value="F:phosphopantetheine binding"/>
    <property type="evidence" value="ECO:0007669"/>
    <property type="project" value="TreeGrafter"/>
</dbReference>
<dbReference type="GO" id="GO:0043041">
    <property type="term" value="P:amino acid activation for nonribosomal peptide biosynthetic process"/>
    <property type="evidence" value="ECO:0007669"/>
    <property type="project" value="TreeGrafter"/>
</dbReference>
<dbReference type="GO" id="GO:0017000">
    <property type="term" value="P:antibiotic biosynthetic process"/>
    <property type="evidence" value="ECO:0007669"/>
    <property type="project" value="UniProtKB-KW"/>
</dbReference>
<dbReference type="GO" id="GO:0044550">
    <property type="term" value="P:secondary metabolite biosynthetic process"/>
    <property type="evidence" value="ECO:0007669"/>
    <property type="project" value="TreeGrafter"/>
</dbReference>
<dbReference type="CDD" id="cd17648">
    <property type="entry name" value="A_NRPS_ACVS-like"/>
    <property type="match status" value="1"/>
</dbReference>
<dbReference type="Gene3D" id="3.30.300.30">
    <property type="match status" value="1"/>
</dbReference>
<dbReference type="Gene3D" id="3.40.50.12780">
    <property type="entry name" value="N-terminal domain of ligase-like"/>
    <property type="match status" value="1"/>
</dbReference>
<dbReference type="Gene3D" id="3.30.559.30">
    <property type="entry name" value="Nonribosomal peptide synthetase, condensation domain"/>
    <property type="match status" value="1"/>
</dbReference>
<dbReference type="InterPro" id="IPR010071">
    <property type="entry name" value="AA_adenyl_dom"/>
</dbReference>
<dbReference type="InterPro" id="IPR045851">
    <property type="entry name" value="AMP-bd_C_sf"/>
</dbReference>
<dbReference type="InterPro" id="IPR020845">
    <property type="entry name" value="AMP-binding_CS"/>
</dbReference>
<dbReference type="InterPro" id="IPR000873">
    <property type="entry name" value="AMP-dep_synth/lig_dom"/>
</dbReference>
<dbReference type="InterPro" id="IPR042099">
    <property type="entry name" value="ANL_N_sf"/>
</dbReference>
<dbReference type="NCBIfam" id="TIGR01733">
    <property type="entry name" value="AA-adenyl-dom"/>
    <property type="match status" value="1"/>
</dbReference>
<dbReference type="PANTHER" id="PTHR45527:SF1">
    <property type="entry name" value="FATTY ACID SYNTHASE"/>
    <property type="match status" value="1"/>
</dbReference>
<dbReference type="PANTHER" id="PTHR45527">
    <property type="entry name" value="NONRIBOSOMAL PEPTIDE SYNTHETASE"/>
    <property type="match status" value="1"/>
</dbReference>
<dbReference type="Pfam" id="PF00501">
    <property type="entry name" value="AMP-binding"/>
    <property type="match status" value="1"/>
</dbReference>
<dbReference type="SUPFAM" id="SSF56801">
    <property type="entry name" value="Acetyl-CoA synthetase-like"/>
    <property type="match status" value="1"/>
</dbReference>
<dbReference type="SUPFAM" id="SSF52777">
    <property type="entry name" value="CoA-dependent acyltransferases"/>
    <property type="match status" value="1"/>
</dbReference>
<dbReference type="PROSITE" id="PS00455">
    <property type="entry name" value="AMP_BINDING"/>
    <property type="match status" value="1"/>
</dbReference>
<accession>Q01757</accession>
<keyword id="KW-0045">Antibiotic biosynthesis</keyword>
<keyword id="KW-0067">ATP-binding</keyword>
<keyword id="KW-0436">Ligase</keyword>
<keyword id="KW-0511">Multifunctional enzyme</keyword>
<keyword id="KW-0547">Nucleotide-binding</keyword>
<keyword id="KW-0596">Phosphopantetheine</keyword>
<keyword id="KW-0677">Repeat</keyword>
<name>ACVS_STRCL</name>
<protein>
    <recommendedName>
        <fullName>N-(5-amino-5-carboxypentanoyl)-L-cysteinyl-D-valine synthase</fullName>
        <ecNumber>6.3.2.26</ecNumber>
    </recommendedName>
    <alternativeName>
        <fullName>Delta-(L-alpha-aminoadipyl)-L-cysteinyl-D-valine synthetase</fullName>
        <shortName>ACV synthetase</shortName>
        <shortName>ACVS</shortName>
    </alternativeName>
</protein>
<feature type="chain" id="PRO_0000193062" description="N-(5-amino-5-carboxypentanoyl)-L-cysteinyl-D-valine synthase">
    <location>
        <begin position="1"/>
        <end position="805" status="greater than"/>
    </location>
</feature>
<feature type="region of interest" description="Disordered" evidence="1">
    <location>
        <begin position="783"/>
        <end position="805"/>
    </location>
</feature>
<feature type="non-terminal residue">
    <location>
        <position position="805"/>
    </location>
</feature>
<gene>
    <name type="primary">pcbAB</name>
</gene>
<evidence type="ECO:0000256" key="1">
    <source>
        <dbReference type="SAM" id="MobiDB-lite"/>
    </source>
</evidence>
<evidence type="ECO:0000305" key="2"/>
<comment type="function">
    <text>Each of the constituent amino acids of ACV are activated as aminoacyl-adenylates with peptide bonds formed through the participation of amino acid thioester intermediates.</text>
</comment>
<comment type="catalytic activity">
    <reaction>
        <text>L-2-aminoadipate + L-valine + L-cysteine + 3 ATP + H2O = N-[(5S)-5-amino-5-carboxypentanoyl]-L-cysteinyl-D-valine + 3 AMP + 3 diphosphate + 3 H(+)</text>
        <dbReference type="Rhea" id="RHEA:23196"/>
        <dbReference type="ChEBI" id="CHEBI:15377"/>
        <dbReference type="ChEBI" id="CHEBI:15378"/>
        <dbReference type="ChEBI" id="CHEBI:30616"/>
        <dbReference type="ChEBI" id="CHEBI:33019"/>
        <dbReference type="ChEBI" id="CHEBI:35235"/>
        <dbReference type="ChEBI" id="CHEBI:57762"/>
        <dbReference type="ChEBI" id="CHEBI:58572"/>
        <dbReference type="ChEBI" id="CHEBI:58672"/>
        <dbReference type="ChEBI" id="CHEBI:456215"/>
        <dbReference type="EC" id="6.3.2.26"/>
    </reaction>
</comment>
<comment type="cofactor">
    <cofactor evidence="2">
        <name>pantetheine 4'-phosphate</name>
        <dbReference type="ChEBI" id="CHEBI:47942"/>
    </cofactor>
    <text evidence="2">Binds 3 phosphopantetheines covalently.</text>
</comment>
<comment type="pathway">
    <text>Antibiotic biosynthesis; penicillin G biosynthesis; penicillin G from L-alpha-aminoadipate and L-cysteine and L-valine: step 1/3.</text>
</comment>
<comment type="similarity">
    <text evidence="2">Belongs to the ATP-dependent AMP-binding enzyme family.</text>
</comment>
<organism>
    <name type="scientific">Streptomyces clavuligerus</name>
    <dbReference type="NCBI Taxonomy" id="1901"/>
    <lineage>
        <taxon>Bacteria</taxon>
        <taxon>Bacillati</taxon>
        <taxon>Actinomycetota</taxon>
        <taxon>Actinomycetes</taxon>
        <taxon>Kitasatosporales</taxon>
        <taxon>Streptomycetaceae</taxon>
        <taxon>Streptomyces</taxon>
    </lineage>
</organism>
<reference key="1">
    <citation type="journal article" date="1994" name="Microbiology">
        <title>Possible involvement of the lysine epsilon-aminotransferase gene (lat) in the expression of the genes encoding ACV synthetase (pcbAB) and isopenicillin N synthase (pcbC) in Streptomyces clavuligerus.</title>
        <authorList>
            <person name="Yu H."/>
            <person name="Serpe E."/>
            <person name="Romero J."/>
            <person name="Coque J.J."/>
            <person name="Maeda K."/>
            <person name="Oelgeschlager M."/>
            <person name="Hintermann G."/>
            <person name="Liras P."/>
            <person name="Martin J.F."/>
            <person name="Demain A.L."/>
            <person name="Piret J."/>
        </authorList>
    </citation>
    <scope>NUCLEOTIDE SEQUENCE [GENOMIC DNA]</scope>
</reference>
<reference key="2">
    <citation type="journal article" date="1991" name="J. Bacteriol.">
        <title>Localization of the lysine epsilon-aminotransferase (lat) and delta-(L-alpha-aminoadipyl)-L-cysteinyl-D-valine synthetase (pcbAB) genes from Streptomyces clavuligerus and production of lysine epsilon-aminotransferase activity in Escherichia coli.</title>
        <authorList>
            <person name="Tobin M.B."/>
            <person name="Kovacevic S."/>
            <person name="Madduri K."/>
            <person name="Hoskins J.A."/>
            <person name="Skatrud P.L."/>
            <person name="Vining L.C."/>
            <person name="Stuttard C."/>
            <person name="Miller J.R."/>
        </authorList>
    </citation>
    <scope>NUCLEOTIDE SEQUENCE [GENOMIC DNA] OF 1-293</scope>
</reference>